<dbReference type="EMBL" id="BC077890">
    <property type="protein sequence ID" value="AAH77890.1"/>
    <property type="molecule type" value="mRNA"/>
</dbReference>
<dbReference type="RefSeq" id="NP_001087011.1">
    <property type="nucleotide sequence ID" value="NM_001093542.1"/>
</dbReference>
<dbReference type="SMR" id="Q6DCV0"/>
<dbReference type="DNASU" id="446846"/>
<dbReference type="GeneID" id="446846"/>
<dbReference type="KEGG" id="xla:446846"/>
<dbReference type="AGR" id="Xenbase:XB-GENE-972383"/>
<dbReference type="CTD" id="446846"/>
<dbReference type="Xenbase" id="XB-GENE-972383">
    <property type="gene designation" value="wdr45.S"/>
</dbReference>
<dbReference type="OMA" id="YAVCENG"/>
<dbReference type="OrthoDB" id="1667587at2759"/>
<dbReference type="Proteomes" id="UP000186698">
    <property type="component" value="Chromosome 2S"/>
</dbReference>
<dbReference type="Bgee" id="446846">
    <property type="expression patterns" value="Expressed in testis and 19 other cell types or tissues"/>
</dbReference>
<dbReference type="GO" id="GO:0005829">
    <property type="term" value="C:cytosol"/>
    <property type="evidence" value="ECO:0000318"/>
    <property type="project" value="GO_Central"/>
</dbReference>
<dbReference type="GO" id="GO:0000407">
    <property type="term" value="C:phagophore assembly site"/>
    <property type="evidence" value="ECO:0000250"/>
    <property type="project" value="UniProtKB"/>
</dbReference>
<dbReference type="GO" id="GO:0034045">
    <property type="term" value="C:phagophore assembly site membrane"/>
    <property type="evidence" value="ECO:0000318"/>
    <property type="project" value="GO_Central"/>
</dbReference>
<dbReference type="GO" id="GO:1901981">
    <property type="term" value="F:phosphatidylinositol phosphate binding"/>
    <property type="evidence" value="ECO:0000250"/>
    <property type="project" value="UniProtKB"/>
</dbReference>
<dbReference type="GO" id="GO:0080025">
    <property type="term" value="F:phosphatidylinositol-3,5-bisphosphate binding"/>
    <property type="evidence" value="ECO:0000318"/>
    <property type="project" value="GO_Central"/>
</dbReference>
<dbReference type="GO" id="GO:0032266">
    <property type="term" value="F:phosphatidylinositol-3-phosphate binding"/>
    <property type="evidence" value="ECO:0000250"/>
    <property type="project" value="UniProtKB"/>
</dbReference>
<dbReference type="GO" id="GO:0030674">
    <property type="term" value="F:protein-macromolecule adaptor activity"/>
    <property type="evidence" value="ECO:0000318"/>
    <property type="project" value="GO_Central"/>
</dbReference>
<dbReference type="GO" id="GO:0000045">
    <property type="term" value="P:autophagosome assembly"/>
    <property type="evidence" value="ECO:0000250"/>
    <property type="project" value="UniProtKB"/>
</dbReference>
<dbReference type="GO" id="GO:0000422">
    <property type="term" value="P:autophagy of mitochondrion"/>
    <property type="evidence" value="ECO:0000318"/>
    <property type="project" value="GO_Central"/>
</dbReference>
<dbReference type="GO" id="GO:0009267">
    <property type="term" value="P:cellular response to starvation"/>
    <property type="evidence" value="ECO:0000250"/>
    <property type="project" value="UniProtKB"/>
</dbReference>
<dbReference type="GO" id="GO:0061723">
    <property type="term" value="P:glycophagy"/>
    <property type="evidence" value="ECO:0000318"/>
    <property type="project" value="GO_Central"/>
</dbReference>
<dbReference type="GO" id="GO:0044804">
    <property type="term" value="P:nucleophagy"/>
    <property type="evidence" value="ECO:0000318"/>
    <property type="project" value="GO_Central"/>
</dbReference>
<dbReference type="GO" id="GO:0000425">
    <property type="term" value="P:pexophagy"/>
    <property type="evidence" value="ECO:0000318"/>
    <property type="project" value="GO_Central"/>
</dbReference>
<dbReference type="GO" id="GO:2000786">
    <property type="term" value="P:positive regulation of autophagosome assembly"/>
    <property type="evidence" value="ECO:0000250"/>
    <property type="project" value="UniProtKB"/>
</dbReference>
<dbReference type="GO" id="GO:0034497">
    <property type="term" value="P:protein localization to phagophore assembly site"/>
    <property type="evidence" value="ECO:0000318"/>
    <property type="project" value="GO_Central"/>
</dbReference>
<dbReference type="FunFam" id="2.130.10.10:FF:000154">
    <property type="entry name" value="WD repeat domain phosphoinositide-interacting protein 4"/>
    <property type="match status" value="1"/>
</dbReference>
<dbReference type="Gene3D" id="2.130.10.10">
    <property type="entry name" value="YVTN repeat-like/Quinoprotein amine dehydrogenase"/>
    <property type="match status" value="1"/>
</dbReference>
<dbReference type="InterPro" id="IPR048720">
    <property type="entry name" value="PROPPIN"/>
</dbReference>
<dbReference type="InterPro" id="IPR015943">
    <property type="entry name" value="WD40/YVTN_repeat-like_dom_sf"/>
</dbReference>
<dbReference type="InterPro" id="IPR036322">
    <property type="entry name" value="WD40_repeat_dom_sf"/>
</dbReference>
<dbReference type="InterPro" id="IPR001680">
    <property type="entry name" value="WD40_rpt"/>
</dbReference>
<dbReference type="PANTHER" id="PTHR11227">
    <property type="entry name" value="WD-REPEAT PROTEIN INTERACTING WITH PHOSPHOINOSIDES WIPI -RELATED"/>
    <property type="match status" value="1"/>
</dbReference>
<dbReference type="Pfam" id="PF21032">
    <property type="entry name" value="PROPPIN"/>
    <property type="match status" value="1"/>
</dbReference>
<dbReference type="SMART" id="SM00320">
    <property type="entry name" value="WD40"/>
    <property type="match status" value="3"/>
</dbReference>
<dbReference type="SUPFAM" id="SSF50978">
    <property type="entry name" value="WD40 repeat-like"/>
    <property type="match status" value="1"/>
</dbReference>
<reference key="1">
    <citation type="submission" date="2004-07" db="EMBL/GenBank/DDBJ databases">
        <authorList>
            <consortium name="NIH - Xenopus Gene Collection (XGC) project"/>
        </authorList>
    </citation>
    <scope>NUCLEOTIDE SEQUENCE [LARGE SCALE MRNA]</scope>
    <source>
        <tissue>Spleen</tissue>
    </source>
</reference>
<comment type="function">
    <text evidence="1">Component of the autophagy machinery that controls the major intracellular degradation process by which cytoplasmic materials are packaged into autophagosomes and delivered to lysosomes for degradation (By similarity). Binds phosphatidylinositol 3-phosphate (PtdIns3P) (By similarity).</text>
</comment>
<comment type="subcellular location">
    <subcellularLocation>
        <location evidence="1">Preautophagosomal structure</location>
    </subcellularLocation>
</comment>
<comment type="domain">
    <text evidence="2">The L/FRRG motif is required for recruitment to PtdIns3P.</text>
</comment>
<comment type="similarity">
    <text evidence="3">Belongs to the WD repeat PROPPIN family.</text>
</comment>
<gene>
    <name type="primary">wdr45</name>
    <name type="synonym">wipi4</name>
</gene>
<protein>
    <recommendedName>
        <fullName>WD repeat domain phosphoinositide-interacting protein 4</fullName>
        <shortName>WIPI-4</shortName>
    </recommendedName>
    <alternativeName>
        <fullName>WD repeat-containing protein 45</fullName>
    </alternativeName>
</protein>
<evidence type="ECO:0000250" key="1">
    <source>
        <dbReference type="UniProtKB" id="Q9Y484"/>
    </source>
</evidence>
<evidence type="ECO:0000250" key="2">
    <source>
        <dbReference type="UniProtKB" id="Q9Y4P8"/>
    </source>
</evidence>
<evidence type="ECO:0000305" key="3"/>
<keyword id="KW-0072">Autophagy</keyword>
<keyword id="KW-0446">Lipid-binding</keyword>
<keyword id="KW-1185">Reference proteome</keyword>
<keyword id="KW-0677">Repeat</keyword>
<keyword id="KW-0853">WD repeat</keyword>
<accession>Q6DCV0</accession>
<name>WIPI4_XENLA</name>
<proteinExistence type="evidence at transcript level"/>
<organism>
    <name type="scientific">Xenopus laevis</name>
    <name type="common">African clawed frog</name>
    <dbReference type="NCBI Taxonomy" id="8355"/>
    <lineage>
        <taxon>Eukaryota</taxon>
        <taxon>Metazoa</taxon>
        <taxon>Chordata</taxon>
        <taxon>Craniata</taxon>
        <taxon>Vertebrata</taxon>
        <taxon>Euteleostomi</taxon>
        <taxon>Amphibia</taxon>
        <taxon>Batrachia</taxon>
        <taxon>Anura</taxon>
        <taxon>Pipoidea</taxon>
        <taxon>Pipidae</taxon>
        <taxon>Xenopodinae</taxon>
        <taxon>Xenopus</taxon>
        <taxon>Xenopus</taxon>
    </lineage>
</organism>
<sequence length="355" mass="39234">MSQQRGVNGLRFNQDQSCFCCAMETGVRIFNIEPLMEKGHLDQEQVGSVGQVEMLHRCNLLALVGGGSNPKFSDISVLIWDDSRDGKDKLVLEFTFTKPVLSVRLRSDKIVIALKNRIYVYSFPDNPTKLFEFDTRDNPKGLCDLCPSLEKQLLIFPGHKCGSLQLVDLCNAKPGSSSAPFTINAHQSELGCLAINQQGTLVASASRKGTLIRLFDTQTREQLVELRRGTDPATLYCINFSHDSSFLCSSSDKGTVHIFALKDTKLNRRSALARVGKVGPMIGQYVDSQWSLASFTVPAESACICAFGKNTSKNVNSVIAVCVDGTFHKYVFTPEGNCNREAFDVYLDICDDDIF</sequence>
<feature type="chain" id="PRO_0000051456" description="WD repeat domain phosphoinositide-interacting protein 4">
    <location>
        <begin position="1"/>
        <end position="355"/>
    </location>
</feature>
<feature type="repeat" description="WD 1">
    <location>
        <begin position="2"/>
        <end position="40"/>
    </location>
</feature>
<feature type="repeat" description="WD 2">
    <location>
        <begin position="185"/>
        <end position="225"/>
    </location>
</feature>
<feature type="repeat" description="WD 3">
    <location>
        <begin position="230"/>
        <end position="269"/>
    </location>
</feature>
<feature type="short sequence motif" description="L/FRRG motif" evidence="2">
    <location>
        <begin position="226"/>
        <end position="229"/>
    </location>
</feature>